<reference key="1">
    <citation type="journal article" date="2000" name="Nature">
        <title>Genome sequence of the endocellular bacterial symbiont of aphids Buchnera sp. APS.</title>
        <authorList>
            <person name="Shigenobu S."/>
            <person name="Watanabe H."/>
            <person name="Hattori M."/>
            <person name="Sakaki Y."/>
            <person name="Ishikawa H."/>
        </authorList>
    </citation>
    <scope>NUCLEOTIDE SEQUENCE [LARGE SCALE GENOMIC DNA]</scope>
    <source>
        <strain>APS</strain>
    </source>
</reference>
<name>Y253_BUCAI</name>
<gene>
    <name type="ordered locus">BU253</name>
</gene>
<keyword id="KW-1185">Reference proteome</keyword>
<accession>P57341</accession>
<organism>
    <name type="scientific">Buchnera aphidicola subsp. Acyrthosiphon pisum (strain APS)</name>
    <name type="common">Acyrthosiphon pisum symbiotic bacterium</name>
    <dbReference type="NCBI Taxonomy" id="107806"/>
    <lineage>
        <taxon>Bacteria</taxon>
        <taxon>Pseudomonadati</taxon>
        <taxon>Pseudomonadota</taxon>
        <taxon>Gammaproteobacteria</taxon>
        <taxon>Enterobacterales</taxon>
        <taxon>Erwiniaceae</taxon>
        <taxon>Buchnera</taxon>
    </lineage>
</organism>
<protein>
    <recommendedName>
        <fullName>UPF0125 protein BU253</fullName>
    </recommendedName>
</protein>
<comment type="similarity">
    <text evidence="1">Belongs to the UPF0125 (RnfH) family.</text>
</comment>
<dbReference type="EMBL" id="BA000003">
    <property type="protein sequence ID" value="BAB12963.1"/>
    <property type="molecule type" value="Genomic_DNA"/>
</dbReference>
<dbReference type="RefSeq" id="NP_240077.1">
    <property type="nucleotide sequence ID" value="NC_002528.1"/>
</dbReference>
<dbReference type="RefSeq" id="WP_010896027.1">
    <property type="nucleotide sequence ID" value="NC_002528.1"/>
</dbReference>
<dbReference type="SMR" id="P57341"/>
<dbReference type="STRING" id="563178.BUAP5A_248"/>
<dbReference type="EnsemblBacteria" id="BAB12963">
    <property type="protein sequence ID" value="BAB12963"/>
    <property type="gene ID" value="BAB12963"/>
</dbReference>
<dbReference type="KEGG" id="buc:BU253"/>
<dbReference type="PATRIC" id="fig|107806.10.peg.263"/>
<dbReference type="eggNOG" id="COG2914">
    <property type="taxonomic scope" value="Bacteria"/>
</dbReference>
<dbReference type="HOGENOM" id="CLU_150721_1_0_6"/>
<dbReference type="BioCyc" id="BAPH107806:GBZJ-248-MONOMER"/>
<dbReference type="Proteomes" id="UP000001806">
    <property type="component" value="Chromosome"/>
</dbReference>
<dbReference type="Gene3D" id="3.10.20.280">
    <property type="entry name" value="RnfH-like"/>
    <property type="match status" value="1"/>
</dbReference>
<dbReference type="HAMAP" id="MF_00460">
    <property type="entry name" value="UPF0125_RnfH"/>
    <property type="match status" value="1"/>
</dbReference>
<dbReference type="InterPro" id="IPR016155">
    <property type="entry name" value="Mopterin_synth/thiamin_S_b"/>
</dbReference>
<dbReference type="InterPro" id="IPR005346">
    <property type="entry name" value="RnfH"/>
</dbReference>
<dbReference type="InterPro" id="IPR037021">
    <property type="entry name" value="RnfH_sf"/>
</dbReference>
<dbReference type="NCBIfam" id="NF002490">
    <property type="entry name" value="PRK01777.1"/>
    <property type="match status" value="1"/>
</dbReference>
<dbReference type="PANTHER" id="PTHR37483">
    <property type="entry name" value="UPF0125 PROTEIN RATB"/>
    <property type="match status" value="1"/>
</dbReference>
<dbReference type="PANTHER" id="PTHR37483:SF1">
    <property type="entry name" value="UPF0125 PROTEIN RATB"/>
    <property type="match status" value="1"/>
</dbReference>
<dbReference type="Pfam" id="PF03658">
    <property type="entry name" value="Ub-RnfH"/>
    <property type="match status" value="1"/>
</dbReference>
<dbReference type="SUPFAM" id="SSF54285">
    <property type="entry name" value="MoaD/ThiS"/>
    <property type="match status" value="1"/>
</dbReference>
<feature type="chain" id="PRO_0000192482" description="UPF0125 protein BU253">
    <location>
        <begin position="1"/>
        <end position="99"/>
    </location>
</feature>
<proteinExistence type="inferred from homology"/>
<evidence type="ECO:0000305" key="1"/>
<sequence length="99" mass="11629">MKIIKVTVVYALPKIQYICQVDIALGSTVKDAILKSNLLNLTNDVSFHHNRIGIYNKTVHLKFKIKDGDRIEIYRNLTIDPKEWRRNNVFLSKKLKKIY</sequence>